<feature type="chain" id="PRO_0000165654" description="RuvB-like helicase 1">
    <location>
        <begin position="1"/>
        <end position="458"/>
    </location>
</feature>
<feature type="region of interest" description="Disordered" evidence="2">
    <location>
        <begin position="1"/>
        <end position="29"/>
    </location>
</feature>
<feature type="binding site" evidence="1">
    <location>
        <begin position="71"/>
        <end position="78"/>
    </location>
    <ligand>
        <name>ATP</name>
        <dbReference type="ChEBI" id="CHEBI:30616"/>
    </ligand>
</feature>
<keyword id="KW-0010">Activator</keyword>
<keyword id="KW-0067">ATP-binding</keyword>
<keyword id="KW-0156">Chromatin regulator</keyword>
<keyword id="KW-0227">DNA damage</keyword>
<keyword id="KW-0234">DNA repair</keyword>
<keyword id="KW-0347">Helicase</keyword>
<keyword id="KW-0378">Hydrolase</keyword>
<keyword id="KW-0547">Nucleotide-binding</keyword>
<keyword id="KW-0539">Nucleus</keyword>
<keyword id="KW-1185">Reference proteome</keyword>
<keyword id="KW-0804">Transcription</keyword>
<keyword id="KW-0805">Transcription regulation</keyword>
<gene>
    <name type="primary">rvb1</name>
    <name type="ORF">AN1971</name>
</gene>
<proteinExistence type="inferred from homology"/>
<name>RUVB1_EMENI</name>
<organism>
    <name type="scientific">Emericella nidulans (strain FGSC A4 / ATCC 38163 / CBS 112.46 / NRRL 194 / M139)</name>
    <name type="common">Aspergillus nidulans</name>
    <dbReference type="NCBI Taxonomy" id="227321"/>
    <lineage>
        <taxon>Eukaryota</taxon>
        <taxon>Fungi</taxon>
        <taxon>Dikarya</taxon>
        <taxon>Ascomycota</taxon>
        <taxon>Pezizomycotina</taxon>
        <taxon>Eurotiomycetes</taxon>
        <taxon>Eurotiomycetidae</taxon>
        <taxon>Eurotiales</taxon>
        <taxon>Aspergillaceae</taxon>
        <taxon>Aspergillus</taxon>
        <taxon>Aspergillus subgen. Nidulantes</taxon>
    </lineage>
</organism>
<protein>
    <recommendedName>
        <fullName>RuvB-like helicase 1</fullName>
        <ecNumber>3.6.4.12</ecNumber>
    </recommendedName>
</protein>
<sequence>MVQISEVKGNSRDNRTAAHTHIKGLGLRPDGTAEVSGDGWVGQAAAREACGVVVDLIKAKKMAGRAVLLAGGPGTGKTALALAVSQELGTKVPFCPIVGSEIYSAEVKKTEALMENFRRAIGLRVRETKEVYEGEVTELTPQEAENPLGGYGRTISHLIIGLKSAKGTKKLRLDPSIYEAIQKERVTVGDVIYIEANTGACKRVGRSDAYATEFDLEAEEYVPVPKGEVHKKKEIVQDVTLHDLDIANARPQGGQDVMSMMGQLMKPKKTEITDKLRQEINKVVNRYIDQGVAELVPGVLFIDEVHMLDIECFTYLNRALESSISPIVILASNRGHTVIRGTDDISAAHGIPPDLLARLLIIPTHPYSPDEIKTIIRLRAKTEGLNITDPALDKVAEHGSKVSLRYALQLLTPASILARVNGRPGGIEEADVTECEDLFLDSKRSAAIVNQDSEKFLY</sequence>
<evidence type="ECO:0000250" key="1"/>
<evidence type="ECO:0000256" key="2">
    <source>
        <dbReference type="SAM" id="MobiDB-lite"/>
    </source>
</evidence>
<evidence type="ECO:0000305" key="3"/>
<comment type="function">
    <text evidence="1">DNA helicase which participates in several chromatin remodeling complexes, including the SWR1 and the INO80 complexes. The SWR1 complex mediates the ATP-dependent exchange of histone H2A for the H2A variant HZT1 leading to transcriptional regulation of selected genes by chromatin remodeling. The INO80 complex remodels chromatin by shifting nucleosomes and is involved in DNA repair. Also involved in pre-rRNA processing (By similarity).</text>
</comment>
<comment type="catalytic activity">
    <reaction>
        <text>ATP + H2O = ADP + phosphate + H(+)</text>
        <dbReference type="Rhea" id="RHEA:13065"/>
        <dbReference type="ChEBI" id="CHEBI:15377"/>
        <dbReference type="ChEBI" id="CHEBI:15378"/>
        <dbReference type="ChEBI" id="CHEBI:30616"/>
        <dbReference type="ChEBI" id="CHEBI:43474"/>
        <dbReference type="ChEBI" id="CHEBI:456216"/>
        <dbReference type="EC" id="3.6.4.12"/>
    </reaction>
</comment>
<comment type="subunit">
    <text evidence="1">May form heterododecamers with RVB2. Component of the SWR1 chromatin remodeling complex, the INO80 chromatin remodeling complex, and of the R2TP complex (By similarity).</text>
</comment>
<comment type="subcellular location">
    <subcellularLocation>
        <location evidence="1">Nucleus</location>
    </subcellularLocation>
</comment>
<comment type="similarity">
    <text evidence="3">Belongs to the RuvB family.</text>
</comment>
<comment type="sequence caution" evidence="3">
    <conflict type="erroneous gene model prediction">
        <sequence resource="EMBL-CDS" id="EAA65136"/>
    </conflict>
</comment>
<dbReference type="EC" id="3.6.4.12"/>
<dbReference type="EMBL" id="AACD01000029">
    <property type="protein sequence ID" value="EAA65136.1"/>
    <property type="status" value="ALT_SEQ"/>
    <property type="molecule type" value="Genomic_DNA"/>
</dbReference>
<dbReference type="EMBL" id="BN001307">
    <property type="protein sequence ID" value="CBF85920.1"/>
    <property type="molecule type" value="Genomic_DNA"/>
</dbReference>
<dbReference type="RefSeq" id="XP_659575.1">
    <property type="nucleotide sequence ID" value="XM_654483.1"/>
</dbReference>
<dbReference type="SMR" id="Q5BBV9"/>
<dbReference type="FunCoup" id="Q5BBV9">
    <property type="interactions" value="1411"/>
</dbReference>
<dbReference type="STRING" id="227321.Q5BBV9"/>
<dbReference type="EnsemblFungi" id="CBF85920">
    <property type="protein sequence ID" value="CBF85920"/>
    <property type="gene ID" value="ANIA_01971"/>
</dbReference>
<dbReference type="VEuPathDB" id="FungiDB:AN1971"/>
<dbReference type="eggNOG" id="KOG1942">
    <property type="taxonomic scope" value="Eukaryota"/>
</dbReference>
<dbReference type="HOGENOM" id="CLU_028311_1_1_1"/>
<dbReference type="InParanoid" id="Q5BBV9"/>
<dbReference type="OMA" id="RTLPYNK"/>
<dbReference type="OrthoDB" id="10060499at2759"/>
<dbReference type="Proteomes" id="UP000000560">
    <property type="component" value="Chromosome VII"/>
</dbReference>
<dbReference type="GO" id="GO:0031011">
    <property type="term" value="C:Ino80 complex"/>
    <property type="evidence" value="ECO:0000318"/>
    <property type="project" value="GO_Central"/>
</dbReference>
<dbReference type="GO" id="GO:0035267">
    <property type="term" value="C:NuA4 histone acetyltransferase complex"/>
    <property type="evidence" value="ECO:0000318"/>
    <property type="project" value="GO_Central"/>
</dbReference>
<dbReference type="GO" id="GO:0097255">
    <property type="term" value="C:R2TP complex"/>
    <property type="evidence" value="ECO:0000318"/>
    <property type="project" value="GO_Central"/>
</dbReference>
<dbReference type="GO" id="GO:0000812">
    <property type="term" value="C:Swr1 complex"/>
    <property type="evidence" value="ECO:0000318"/>
    <property type="project" value="GO_Central"/>
</dbReference>
<dbReference type="GO" id="GO:0043138">
    <property type="term" value="F:3'-5' DNA helicase activity"/>
    <property type="evidence" value="ECO:0007669"/>
    <property type="project" value="EnsemblFungi"/>
</dbReference>
<dbReference type="GO" id="GO:0043139">
    <property type="term" value="F:5'-3' DNA helicase activity"/>
    <property type="evidence" value="ECO:0007669"/>
    <property type="project" value="EnsemblFungi"/>
</dbReference>
<dbReference type="GO" id="GO:0005524">
    <property type="term" value="F:ATP binding"/>
    <property type="evidence" value="ECO:0007669"/>
    <property type="project" value="UniProtKB-KW"/>
</dbReference>
<dbReference type="GO" id="GO:0016887">
    <property type="term" value="F:ATP hydrolysis activity"/>
    <property type="evidence" value="ECO:0007669"/>
    <property type="project" value="InterPro"/>
</dbReference>
<dbReference type="GO" id="GO:0003678">
    <property type="term" value="F:DNA helicase activity"/>
    <property type="evidence" value="ECO:0000318"/>
    <property type="project" value="GO_Central"/>
</dbReference>
<dbReference type="GO" id="GO:0000492">
    <property type="term" value="P:box C/D snoRNP assembly"/>
    <property type="evidence" value="ECO:0000318"/>
    <property type="project" value="GO_Central"/>
</dbReference>
<dbReference type="GO" id="GO:0006338">
    <property type="term" value="P:chromatin remodeling"/>
    <property type="evidence" value="ECO:0000318"/>
    <property type="project" value="GO_Central"/>
</dbReference>
<dbReference type="GO" id="GO:0006281">
    <property type="term" value="P:DNA repair"/>
    <property type="evidence" value="ECO:0007669"/>
    <property type="project" value="UniProtKB-KW"/>
</dbReference>
<dbReference type="GO" id="GO:0006357">
    <property type="term" value="P:regulation of transcription by RNA polymerase II"/>
    <property type="evidence" value="ECO:0000318"/>
    <property type="project" value="GO_Central"/>
</dbReference>
<dbReference type="FunFam" id="1.10.8.60:FF:000010">
    <property type="entry name" value="RuvB-like helicase"/>
    <property type="match status" value="1"/>
</dbReference>
<dbReference type="FunFam" id="2.40.50.360:FF:000001">
    <property type="entry name" value="RuvB-like helicase"/>
    <property type="match status" value="1"/>
</dbReference>
<dbReference type="Gene3D" id="1.10.8.60">
    <property type="match status" value="1"/>
</dbReference>
<dbReference type="Gene3D" id="3.40.50.300">
    <property type="entry name" value="P-loop containing nucleotide triphosphate hydrolases"/>
    <property type="match status" value="1"/>
</dbReference>
<dbReference type="Gene3D" id="2.40.50.360">
    <property type="entry name" value="RuvB-like helicase, domain II"/>
    <property type="match status" value="1"/>
</dbReference>
<dbReference type="InterPro" id="IPR003593">
    <property type="entry name" value="AAA+_ATPase"/>
</dbReference>
<dbReference type="InterPro" id="IPR027417">
    <property type="entry name" value="P-loop_NTPase"/>
</dbReference>
<dbReference type="InterPro" id="IPR027238">
    <property type="entry name" value="RuvB-like"/>
</dbReference>
<dbReference type="InterPro" id="IPR041048">
    <property type="entry name" value="RuvB-like_C"/>
</dbReference>
<dbReference type="InterPro" id="IPR042487">
    <property type="entry name" value="RuvBL1/2_DNA/RNA_bd_dom"/>
</dbReference>
<dbReference type="InterPro" id="IPR010339">
    <property type="entry name" value="TIP49_P-loop"/>
</dbReference>
<dbReference type="PANTHER" id="PTHR11093">
    <property type="entry name" value="RUVB-RELATED REPTIN AND PONTIN"/>
    <property type="match status" value="1"/>
</dbReference>
<dbReference type="Pfam" id="PF06068">
    <property type="entry name" value="TIP49"/>
    <property type="match status" value="1"/>
</dbReference>
<dbReference type="Pfam" id="PF17856">
    <property type="entry name" value="TIP49_C"/>
    <property type="match status" value="1"/>
</dbReference>
<dbReference type="SMART" id="SM00382">
    <property type="entry name" value="AAA"/>
    <property type="match status" value="1"/>
</dbReference>
<dbReference type="SUPFAM" id="SSF52540">
    <property type="entry name" value="P-loop containing nucleoside triphosphate hydrolases"/>
    <property type="match status" value="1"/>
</dbReference>
<accession>Q5BBV9</accession>
<accession>C8VL43</accession>
<reference key="1">
    <citation type="journal article" date="2005" name="Nature">
        <title>Sequencing of Aspergillus nidulans and comparative analysis with A. fumigatus and A. oryzae.</title>
        <authorList>
            <person name="Galagan J.E."/>
            <person name="Calvo S.E."/>
            <person name="Cuomo C."/>
            <person name="Ma L.-J."/>
            <person name="Wortman J.R."/>
            <person name="Batzoglou S."/>
            <person name="Lee S.-I."/>
            <person name="Bastuerkmen M."/>
            <person name="Spevak C.C."/>
            <person name="Clutterbuck J."/>
            <person name="Kapitonov V."/>
            <person name="Jurka J."/>
            <person name="Scazzocchio C."/>
            <person name="Farman M.L."/>
            <person name="Butler J."/>
            <person name="Purcell S."/>
            <person name="Harris S."/>
            <person name="Braus G.H."/>
            <person name="Draht O."/>
            <person name="Busch S."/>
            <person name="D'Enfert C."/>
            <person name="Bouchier C."/>
            <person name="Goldman G.H."/>
            <person name="Bell-Pedersen D."/>
            <person name="Griffiths-Jones S."/>
            <person name="Doonan J.H."/>
            <person name="Yu J."/>
            <person name="Vienken K."/>
            <person name="Pain A."/>
            <person name="Freitag M."/>
            <person name="Selker E.U."/>
            <person name="Archer D.B."/>
            <person name="Penalva M.A."/>
            <person name="Oakley B.R."/>
            <person name="Momany M."/>
            <person name="Tanaka T."/>
            <person name="Kumagai T."/>
            <person name="Asai K."/>
            <person name="Machida M."/>
            <person name="Nierman W.C."/>
            <person name="Denning D.W."/>
            <person name="Caddick M.X."/>
            <person name="Hynes M."/>
            <person name="Paoletti M."/>
            <person name="Fischer R."/>
            <person name="Miller B.L."/>
            <person name="Dyer P.S."/>
            <person name="Sachs M.S."/>
            <person name="Osmani S.A."/>
            <person name="Birren B.W."/>
        </authorList>
    </citation>
    <scope>NUCLEOTIDE SEQUENCE [LARGE SCALE GENOMIC DNA]</scope>
    <source>
        <strain>FGSC A4 / ATCC 38163 / CBS 112.46 / NRRL 194 / M139</strain>
    </source>
</reference>
<reference key="2">
    <citation type="journal article" date="2009" name="Fungal Genet. Biol.">
        <title>The 2008 update of the Aspergillus nidulans genome annotation: a community effort.</title>
        <authorList>
            <person name="Wortman J.R."/>
            <person name="Gilsenan J.M."/>
            <person name="Joardar V."/>
            <person name="Deegan J."/>
            <person name="Clutterbuck J."/>
            <person name="Andersen M.R."/>
            <person name="Archer D."/>
            <person name="Bencina M."/>
            <person name="Braus G."/>
            <person name="Coutinho P."/>
            <person name="von Dohren H."/>
            <person name="Doonan J."/>
            <person name="Driessen A.J."/>
            <person name="Durek P."/>
            <person name="Espeso E."/>
            <person name="Fekete E."/>
            <person name="Flipphi M."/>
            <person name="Estrada C.G."/>
            <person name="Geysens S."/>
            <person name="Goldman G."/>
            <person name="de Groot P.W."/>
            <person name="Hansen K."/>
            <person name="Harris S.D."/>
            <person name="Heinekamp T."/>
            <person name="Helmstaedt K."/>
            <person name="Henrissat B."/>
            <person name="Hofmann G."/>
            <person name="Homan T."/>
            <person name="Horio T."/>
            <person name="Horiuchi H."/>
            <person name="James S."/>
            <person name="Jones M."/>
            <person name="Karaffa L."/>
            <person name="Karanyi Z."/>
            <person name="Kato M."/>
            <person name="Keller N."/>
            <person name="Kelly D.E."/>
            <person name="Kiel J.A."/>
            <person name="Kim J.M."/>
            <person name="van der Klei I.J."/>
            <person name="Klis F.M."/>
            <person name="Kovalchuk A."/>
            <person name="Krasevec N."/>
            <person name="Kubicek C.P."/>
            <person name="Liu B."/>
            <person name="Maccabe A."/>
            <person name="Meyer V."/>
            <person name="Mirabito P."/>
            <person name="Miskei M."/>
            <person name="Mos M."/>
            <person name="Mullins J."/>
            <person name="Nelson D.R."/>
            <person name="Nielsen J."/>
            <person name="Oakley B.R."/>
            <person name="Osmani S.A."/>
            <person name="Pakula T."/>
            <person name="Paszewski A."/>
            <person name="Paulsen I."/>
            <person name="Pilsyk S."/>
            <person name="Pocsi I."/>
            <person name="Punt P.J."/>
            <person name="Ram A.F."/>
            <person name="Ren Q."/>
            <person name="Robellet X."/>
            <person name="Robson G."/>
            <person name="Seiboth B."/>
            <person name="van Solingen P."/>
            <person name="Specht T."/>
            <person name="Sun J."/>
            <person name="Taheri-Talesh N."/>
            <person name="Takeshita N."/>
            <person name="Ussery D."/>
            <person name="vanKuyk P.A."/>
            <person name="Visser H."/>
            <person name="van de Vondervoort P.J."/>
            <person name="de Vries R.P."/>
            <person name="Walton J."/>
            <person name="Xiang X."/>
            <person name="Xiong Y."/>
            <person name="Zeng A.P."/>
            <person name="Brandt B.W."/>
            <person name="Cornell M.J."/>
            <person name="van den Hondel C.A."/>
            <person name="Visser J."/>
            <person name="Oliver S.G."/>
            <person name="Turner G."/>
        </authorList>
    </citation>
    <scope>GENOME REANNOTATION</scope>
    <source>
        <strain>FGSC A4 / ATCC 38163 / CBS 112.46 / NRRL 194 / M139</strain>
    </source>
</reference>